<accession>P84293</accession>
<proteinExistence type="evidence at protein level"/>
<evidence type="ECO:0000250" key="1">
    <source>
        <dbReference type="UniProtKB" id="P10787"/>
    </source>
</evidence>
<evidence type="ECO:0000255" key="2"/>
<evidence type="ECO:0000269" key="3">
    <source>
    </source>
</evidence>
<evidence type="ECO:0000269" key="4">
    <source ref="2"/>
</evidence>
<evidence type="ECO:0000305" key="5"/>
<sequence length="650" mass="75035">DSPGGASDAQKTFDVNSLMPVKYEEIRDPHLKELSLSFDPLSGHYDDDGVSAKRLMKELNEHRLLQQSHWFSLFNPRTREEDLMLYNVDEHSGNWDTFAGNAAFFRVHVNEGFFVYASYSVVIHSKLTQHVVLPPLYEVTPHLFTNSEVIQKAYAAKMTQTPTKIFAHFTGSKSNPEQRVAYFGEDIGMNTHHVTWHLEFPFWWDDAHYDHHIERKGESCSSWVHHQLTVRFDAERLSNYLDPVRELHWDDVIHEGFAPHTSYKYGGYFPDRPDNVNFEDVDGVARVRDMLLFEERIQDAIAHGYLRYNGSTINIRDNHGIDVLGDVFESSMYSPRQDYYGALHNQAHRVLGSQADPHGKFALPPGVLEHFETATRDPAFFRLHKYMDNIFRKHKDSLTPYTKNELKFEGVNIDSIYEKGNLETYFESFMYTGVNIMLLTNDVDDVDIATYITDLAHKELSFQEDVTNEGDIGVLETVRIFAWPHIDDDHVEFSFNEGRWDVIEMDKFWVMLEHGHHSIDRSSFDSTVTIPDRPSFHDIEDRTSEAIPHGKELHIEEFESVTGLPNRFLIPKGLVKGKDMDVMVAVTSGEGLAAVEGLHRSANFAHHGCPEVRYPDKRPHGYPLYRPVDDERIITGVTNFKHIQVKVFHH</sequence>
<organism>
    <name type="scientific">Carcinus aestuarii</name>
    <name type="common">Green crab</name>
    <name type="synonym">Carcinus mediterraneus</name>
    <dbReference type="NCBI Taxonomy" id="53602"/>
    <lineage>
        <taxon>Eukaryota</taxon>
        <taxon>Metazoa</taxon>
        <taxon>Ecdysozoa</taxon>
        <taxon>Arthropoda</taxon>
        <taxon>Crustacea</taxon>
        <taxon>Multicrustacea</taxon>
        <taxon>Malacostraca</taxon>
        <taxon>Eumalacostraca</taxon>
        <taxon>Eucarida</taxon>
        <taxon>Decapoda</taxon>
        <taxon>Pleocyemata</taxon>
        <taxon>Brachyura</taxon>
        <taxon>Eubrachyura</taxon>
        <taxon>Portunoidea</taxon>
        <taxon>Carcinidae</taxon>
        <taxon>Carcinus</taxon>
    </lineage>
</organism>
<dbReference type="SMR" id="P84293"/>
<dbReference type="iPTMnet" id="P84293"/>
<dbReference type="GO" id="GO:0005576">
    <property type="term" value="C:extracellular region"/>
    <property type="evidence" value="ECO:0007669"/>
    <property type="project" value="UniProtKB-SubCell"/>
</dbReference>
<dbReference type="GO" id="GO:0046872">
    <property type="term" value="F:metal ion binding"/>
    <property type="evidence" value="ECO:0007669"/>
    <property type="project" value="UniProtKB-KW"/>
</dbReference>
<dbReference type="GO" id="GO:0016491">
    <property type="term" value="F:oxidoreductase activity"/>
    <property type="evidence" value="ECO:0007669"/>
    <property type="project" value="InterPro"/>
</dbReference>
<dbReference type="GO" id="GO:0005344">
    <property type="term" value="F:oxygen carrier activity"/>
    <property type="evidence" value="ECO:0007669"/>
    <property type="project" value="UniProtKB-KW"/>
</dbReference>
<dbReference type="Gene3D" id="1.10.1280.10">
    <property type="entry name" value="Di-copper center containing domain from catechol oxidase"/>
    <property type="match status" value="1"/>
</dbReference>
<dbReference type="Gene3D" id="2.60.40.1520">
    <property type="entry name" value="Hemocyanin, C-terminal domain"/>
    <property type="match status" value="1"/>
</dbReference>
<dbReference type="Gene3D" id="1.20.1370.10">
    <property type="entry name" value="Hemocyanin, N-terminal domain"/>
    <property type="match status" value="1"/>
</dbReference>
<dbReference type="InterPro" id="IPR008922">
    <property type="entry name" value="Di-copper_centre_dom_sf"/>
</dbReference>
<dbReference type="InterPro" id="IPR013788">
    <property type="entry name" value="Hemocyanin/hexamerin"/>
</dbReference>
<dbReference type="InterPro" id="IPR000896">
    <property type="entry name" value="Hemocyanin/hexamerin_mid_dom"/>
</dbReference>
<dbReference type="InterPro" id="IPR005203">
    <property type="entry name" value="Hemocyanin_C"/>
</dbReference>
<dbReference type="InterPro" id="IPR037020">
    <property type="entry name" value="Hemocyanin_C_sf"/>
</dbReference>
<dbReference type="InterPro" id="IPR005204">
    <property type="entry name" value="Hemocyanin_N"/>
</dbReference>
<dbReference type="InterPro" id="IPR036697">
    <property type="entry name" value="Hemocyanin_N_sf"/>
</dbReference>
<dbReference type="InterPro" id="IPR014756">
    <property type="entry name" value="Ig_E-set"/>
</dbReference>
<dbReference type="InterPro" id="IPR002227">
    <property type="entry name" value="Tyrosinase_Cu-bd"/>
</dbReference>
<dbReference type="PANTHER" id="PTHR11511:SF5">
    <property type="entry name" value="FAT-BODY PROTEIN 1-RELATED"/>
    <property type="match status" value="1"/>
</dbReference>
<dbReference type="PANTHER" id="PTHR11511">
    <property type="entry name" value="LARVAL STORAGE PROTEIN/PHENOLOXIDASE"/>
    <property type="match status" value="1"/>
</dbReference>
<dbReference type="Pfam" id="PF03723">
    <property type="entry name" value="Hemocyanin_C"/>
    <property type="match status" value="1"/>
</dbReference>
<dbReference type="Pfam" id="PF00372">
    <property type="entry name" value="Hemocyanin_M"/>
    <property type="match status" value="1"/>
</dbReference>
<dbReference type="Pfam" id="PF03722">
    <property type="entry name" value="Hemocyanin_N"/>
    <property type="match status" value="1"/>
</dbReference>
<dbReference type="PRINTS" id="PR00187">
    <property type="entry name" value="HAEMOCYANIN"/>
</dbReference>
<dbReference type="SUPFAM" id="SSF48056">
    <property type="entry name" value="Di-copper centre-containing domain"/>
    <property type="match status" value="1"/>
</dbReference>
<dbReference type="SUPFAM" id="SSF81296">
    <property type="entry name" value="E set domains"/>
    <property type="match status" value="1"/>
</dbReference>
<dbReference type="SUPFAM" id="SSF48050">
    <property type="entry name" value="Hemocyanin, N-terminal domain"/>
    <property type="match status" value="1"/>
</dbReference>
<dbReference type="PROSITE" id="PS00209">
    <property type="entry name" value="HEMOCYANIN_1"/>
    <property type="match status" value="1"/>
</dbReference>
<dbReference type="PROSITE" id="PS00210">
    <property type="entry name" value="HEMOCYANIN_2"/>
    <property type="match status" value="1"/>
</dbReference>
<dbReference type="PROSITE" id="PS00498">
    <property type="entry name" value="TYROSINASE_2"/>
    <property type="match status" value="1"/>
</dbReference>
<keyword id="KW-0186">Copper</keyword>
<keyword id="KW-0903">Direct protein sequencing</keyword>
<keyword id="KW-0325">Glycoprotein</keyword>
<keyword id="KW-0479">Metal-binding</keyword>
<keyword id="KW-0561">Oxygen transport</keyword>
<keyword id="KW-0964">Secreted</keyword>
<keyword id="KW-0813">Transport</keyword>
<name>HCY2_CARAE</name>
<feature type="chain" id="PRO_0000204256" description="Hemocyanin subunit 2">
    <location>
        <begin position="1"/>
        <end position="650"/>
    </location>
</feature>
<feature type="binding site" evidence="1">
    <location>
        <position position="193"/>
    </location>
    <ligand>
        <name>Cu cation</name>
        <dbReference type="ChEBI" id="CHEBI:23378"/>
        <label>A</label>
    </ligand>
</feature>
<feature type="binding site" evidence="1">
    <location>
        <position position="197"/>
    </location>
    <ligand>
        <name>Cu cation</name>
        <dbReference type="ChEBI" id="CHEBI:23378"/>
        <label>A</label>
    </ligand>
</feature>
<feature type="binding site" evidence="1">
    <location>
        <position position="225"/>
    </location>
    <ligand>
        <name>Cu cation</name>
        <dbReference type="ChEBI" id="CHEBI:23378"/>
        <label>A</label>
    </ligand>
</feature>
<feature type="binding site" evidence="1">
    <location>
        <position position="344"/>
    </location>
    <ligand>
        <name>Cu cation</name>
        <dbReference type="ChEBI" id="CHEBI:23378"/>
        <label>B</label>
    </ligand>
</feature>
<feature type="binding site" evidence="1">
    <location>
        <position position="348"/>
    </location>
    <ligand>
        <name>Cu cation</name>
        <dbReference type="ChEBI" id="CHEBI:23378"/>
        <label>B</label>
    </ligand>
</feature>
<feature type="binding site" evidence="1">
    <location>
        <position position="384"/>
    </location>
    <ligand>
        <name>Cu cation</name>
        <dbReference type="ChEBI" id="CHEBI:23378"/>
        <label>B</label>
    </ligand>
</feature>
<feature type="glycosylation site" description="O-linked (GalNAc...) serine" evidence="4">
    <location>
        <position position="120"/>
    </location>
</feature>
<feature type="glycosylation site" description="O-linked (GalNAc...) serine" evidence="3">
    <location>
        <position position="172"/>
    </location>
</feature>
<feature type="glycosylation site" description="N-linked (GlcNAc...) asparagine" evidence="3">
    <location>
        <position position="309"/>
    </location>
</feature>
<feature type="unsure residue" description="S or L" evidence="3">
    <location>
        <position position="118"/>
    </location>
</feature>
<feature type="unsure residue" description="S or V" evidence="3">
    <location>
        <position position="120"/>
    </location>
</feature>
<reference key="1">
    <citation type="journal article" date="2005" name="J. Biochem.">
        <title>Structure of hemocyanin subunit CaeSS2 of the crustacean mediterranean crab Carcinus aestuarii.</title>
        <authorList>
            <person name="Dolashka-Angelova P."/>
            <person name="Dolashki A."/>
            <person name="Savvides S.N."/>
            <person name="Hristova R."/>
            <person name="Van Beeumen J."/>
            <person name="Voelter W."/>
            <person name="Devreese B."/>
            <person name="Weser U."/>
            <person name="Di Muro P."/>
            <person name="Salvato B."/>
            <person name="Stevanovic S."/>
        </authorList>
    </citation>
    <scope>PROTEIN SEQUENCE</scope>
    <scope>FUNCTION</scope>
    <scope>SUBUNIT</scope>
    <scope>SUBCELLULAR LOCATION</scope>
    <scope>TISSUE SPECIFICITY</scope>
    <scope>GLYCOSYLATION AT SER-172 AND ASN-309</scope>
</reference>
<reference key="2">
    <citation type="unpublished observations" date="2005-01">
        <authorList>
            <person name="Stevanovic S."/>
        </authorList>
    </citation>
    <scope>GLYCOSYLATION AT SER-120</scope>
</reference>
<protein>
    <recommendedName>
        <fullName>Hemocyanin subunit 2</fullName>
    </recommendedName>
    <alternativeName>
        <fullName>CaeSS2</fullName>
    </alternativeName>
</protein>
<comment type="function">
    <text evidence="3 5">Hemocyanins are copper-containing oxygen carriers occurring freely dissolved in the hemolymph of many mollusks and arthropods.</text>
</comment>
<comment type="subunit">
    <text evidence="3">Hexamer of a number of different chains, of which five have been identified.</text>
</comment>
<comment type="subcellular location">
    <subcellularLocation>
        <location evidence="3">Secreted</location>
        <location evidence="3">Extracellular space</location>
    </subcellularLocation>
</comment>
<comment type="tissue specificity">
    <text evidence="3">Hemolymph.</text>
</comment>
<comment type="PTM">
    <text evidence="3">Contains one N-glycosylated and three O-glycosylated residues. The position of one of the O-glycosylated residues has not been determined.</text>
</comment>
<comment type="PTM">
    <text evidence="3 4">O-linked glycan at Ser-120 may be composed of two GalNAc, three Gal, and two N-acetylneuraminic acid units for a total 1525-Da MW.</text>
</comment>
<comment type="similarity">
    <text evidence="2">Belongs to the tyrosinase family. Hemocyanin subfamily.</text>
</comment>